<organism>
    <name type="scientific">Cereibacter sphaeroides</name>
    <name type="common">Rhodobacter sphaeroides</name>
    <dbReference type="NCBI Taxonomy" id="1063"/>
    <lineage>
        <taxon>Bacteria</taxon>
        <taxon>Pseudomonadati</taxon>
        <taxon>Pseudomonadota</taxon>
        <taxon>Alphaproteobacteria</taxon>
        <taxon>Rhodobacterales</taxon>
        <taxon>Paracoccaceae</taxon>
        <taxon>Cereibacter</taxon>
    </lineage>
</organism>
<accession>P95647</accession>
<reference key="1">
    <citation type="journal article" date="1997" name="J. Bacteriol.">
        <title>Cloning and characterization of two groESL operons of Rhodobacter sphaeroides: transcriptional regulation of the heat-induced groESL operon.</title>
        <authorList>
            <person name="Lee W.T."/>
            <person name="Terlesky K.C."/>
            <person name="Tabita F.R."/>
        </authorList>
    </citation>
    <scope>NUCLEOTIDE SEQUENCE [GENOMIC DNA]</scope>
    <source>
        <strain>HR</strain>
    </source>
</reference>
<comment type="function">
    <text evidence="1">Together with its co-chaperonin GroES, plays an essential role in assisting protein folding. The GroEL-GroES system forms a nano-cage that allows encapsulation of the non-native substrate proteins and provides a physical environment optimized to promote and accelerate protein folding.</text>
</comment>
<comment type="catalytic activity">
    <reaction evidence="1">
        <text>ATP + H2O + a folded polypeptide = ADP + phosphate + an unfolded polypeptide.</text>
        <dbReference type="EC" id="5.6.1.7"/>
    </reaction>
</comment>
<comment type="subunit">
    <text evidence="1">Forms a cylinder of 14 subunits composed of two heptameric rings stacked back-to-back. Interacts with the co-chaperonin GroES.</text>
</comment>
<comment type="subcellular location">
    <subcellularLocation>
        <location evidence="1">Cytoplasm</location>
    </subcellularLocation>
</comment>
<comment type="similarity">
    <text evidence="1">Belongs to the chaperonin (HSP60) family.</text>
</comment>
<name>CH602_CERSP</name>
<sequence>MSAKEVRFGTDARGRMLKGINTLADTVKITLGPKGRNVILDTSYGAPRITKDGVTVAREIELSDRFENVGAQMVKEVASRTNEEAGDGTTTATVLAQAIAKEGMKAVAAGMNPMDLKRGIDRAVAIVIAEIRSMSRPVGDSAEIAKVGALSANGEAAIGRQIADAMAKVGTAGVIKVENKGLETETEVVEGMQFDRGYLSPYFITHAQKMVVELDDCAILLHEGKLTSLASMVPLLEAVVQAEKQLLVVAEDVEGEALTTLVVNKLRGGLKVAAAKAPGFGDGRAAMLEDLAVLTGAHLISAELGTKLETVTLDMLGFAKKVVLTKDSTILIDSAGDKAAIASRIGQIRNQIEDTTSAYNKEKLQERLARLAGGVAVIRVGGATEIEVKERRDRVEDTLNATRAAVQEGVVPGGGAALIHAGKALAGLKGDNPDQDAGIKIIRRAIQAPLRQIADNAGIDGSVVAGKVIENDSATFGFDAQLETYGDMLQAGIIDPTKVVRIALEDAASIAGLLITTEVIIAHKPERGERMSQMDEMGGMM</sequence>
<gene>
    <name evidence="1" type="primary">groEL2</name>
    <name evidence="1" type="synonym">groL2</name>
</gene>
<protein>
    <recommendedName>
        <fullName evidence="1">Chaperonin GroEL 2</fullName>
        <ecNumber evidence="1">5.6.1.7</ecNumber>
    </recommendedName>
    <alternativeName>
        <fullName evidence="1">60 kDa chaperonin 2</fullName>
    </alternativeName>
    <alternativeName>
        <fullName evidence="1">Chaperonin-60 2</fullName>
        <shortName evidence="1">Cpn60 2</shortName>
    </alternativeName>
</protein>
<dbReference type="EC" id="5.6.1.7" evidence="1"/>
<dbReference type="EMBL" id="U66831">
    <property type="protein sequence ID" value="AAB41530.1"/>
    <property type="molecule type" value="Genomic_DNA"/>
</dbReference>
<dbReference type="SMR" id="P95647"/>
<dbReference type="GO" id="GO:0005737">
    <property type="term" value="C:cytoplasm"/>
    <property type="evidence" value="ECO:0007669"/>
    <property type="project" value="UniProtKB-SubCell"/>
</dbReference>
<dbReference type="GO" id="GO:0005524">
    <property type="term" value="F:ATP binding"/>
    <property type="evidence" value="ECO:0007669"/>
    <property type="project" value="UniProtKB-UniRule"/>
</dbReference>
<dbReference type="GO" id="GO:0140662">
    <property type="term" value="F:ATP-dependent protein folding chaperone"/>
    <property type="evidence" value="ECO:0007669"/>
    <property type="project" value="InterPro"/>
</dbReference>
<dbReference type="GO" id="GO:0016853">
    <property type="term" value="F:isomerase activity"/>
    <property type="evidence" value="ECO:0007669"/>
    <property type="project" value="UniProtKB-KW"/>
</dbReference>
<dbReference type="GO" id="GO:0051082">
    <property type="term" value="F:unfolded protein binding"/>
    <property type="evidence" value="ECO:0007669"/>
    <property type="project" value="UniProtKB-UniRule"/>
</dbReference>
<dbReference type="GO" id="GO:0042026">
    <property type="term" value="P:protein refolding"/>
    <property type="evidence" value="ECO:0007669"/>
    <property type="project" value="UniProtKB-UniRule"/>
</dbReference>
<dbReference type="CDD" id="cd03344">
    <property type="entry name" value="GroEL"/>
    <property type="match status" value="1"/>
</dbReference>
<dbReference type="FunFam" id="1.10.560.10:FF:000001">
    <property type="entry name" value="60 kDa chaperonin"/>
    <property type="match status" value="1"/>
</dbReference>
<dbReference type="FunFam" id="3.50.7.10:FF:000001">
    <property type="entry name" value="60 kDa chaperonin"/>
    <property type="match status" value="1"/>
</dbReference>
<dbReference type="Gene3D" id="3.50.7.10">
    <property type="entry name" value="GroEL"/>
    <property type="match status" value="1"/>
</dbReference>
<dbReference type="Gene3D" id="1.10.560.10">
    <property type="entry name" value="GroEL-like equatorial domain"/>
    <property type="match status" value="1"/>
</dbReference>
<dbReference type="Gene3D" id="3.30.260.10">
    <property type="entry name" value="TCP-1-like chaperonin intermediate domain"/>
    <property type="match status" value="1"/>
</dbReference>
<dbReference type="HAMAP" id="MF_00600">
    <property type="entry name" value="CH60"/>
    <property type="match status" value="1"/>
</dbReference>
<dbReference type="InterPro" id="IPR018370">
    <property type="entry name" value="Chaperonin_Cpn60_CS"/>
</dbReference>
<dbReference type="InterPro" id="IPR001844">
    <property type="entry name" value="Cpn60/GroEL"/>
</dbReference>
<dbReference type="InterPro" id="IPR002423">
    <property type="entry name" value="Cpn60/GroEL/TCP-1"/>
</dbReference>
<dbReference type="InterPro" id="IPR027409">
    <property type="entry name" value="GroEL-like_apical_dom_sf"/>
</dbReference>
<dbReference type="InterPro" id="IPR027413">
    <property type="entry name" value="GROEL-like_equatorial_sf"/>
</dbReference>
<dbReference type="InterPro" id="IPR027410">
    <property type="entry name" value="TCP-1-like_intermed_sf"/>
</dbReference>
<dbReference type="NCBIfam" id="TIGR02348">
    <property type="entry name" value="GroEL"/>
    <property type="match status" value="1"/>
</dbReference>
<dbReference type="NCBIfam" id="NF000592">
    <property type="entry name" value="PRK00013.1"/>
    <property type="match status" value="1"/>
</dbReference>
<dbReference type="NCBIfam" id="NF009487">
    <property type="entry name" value="PRK12849.1"/>
    <property type="match status" value="1"/>
</dbReference>
<dbReference type="NCBIfam" id="NF009488">
    <property type="entry name" value="PRK12850.1"/>
    <property type="match status" value="1"/>
</dbReference>
<dbReference type="NCBIfam" id="NF009489">
    <property type="entry name" value="PRK12851.1"/>
    <property type="match status" value="1"/>
</dbReference>
<dbReference type="PANTHER" id="PTHR45633">
    <property type="entry name" value="60 KDA HEAT SHOCK PROTEIN, MITOCHONDRIAL"/>
    <property type="match status" value="1"/>
</dbReference>
<dbReference type="Pfam" id="PF00118">
    <property type="entry name" value="Cpn60_TCP1"/>
    <property type="match status" value="1"/>
</dbReference>
<dbReference type="PRINTS" id="PR00298">
    <property type="entry name" value="CHAPERONIN60"/>
</dbReference>
<dbReference type="SUPFAM" id="SSF52029">
    <property type="entry name" value="GroEL apical domain-like"/>
    <property type="match status" value="1"/>
</dbReference>
<dbReference type="SUPFAM" id="SSF48592">
    <property type="entry name" value="GroEL equatorial domain-like"/>
    <property type="match status" value="1"/>
</dbReference>
<dbReference type="SUPFAM" id="SSF54849">
    <property type="entry name" value="GroEL-intermediate domain like"/>
    <property type="match status" value="1"/>
</dbReference>
<dbReference type="PROSITE" id="PS00296">
    <property type="entry name" value="CHAPERONINS_CPN60"/>
    <property type="match status" value="1"/>
</dbReference>
<proteinExistence type="inferred from homology"/>
<feature type="chain" id="PRO_0000063513" description="Chaperonin GroEL 2">
    <location>
        <begin position="1"/>
        <end position="541"/>
    </location>
</feature>
<feature type="binding site" evidence="1">
    <location>
        <begin position="30"/>
        <end position="33"/>
    </location>
    <ligand>
        <name>ATP</name>
        <dbReference type="ChEBI" id="CHEBI:30616"/>
    </ligand>
</feature>
<feature type="binding site" evidence="1">
    <location>
        <position position="51"/>
    </location>
    <ligand>
        <name>ATP</name>
        <dbReference type="ChEBI" id="CHEBI:30616"/>
    </ligand>
</feature>
<feature type="binding site" evidence="1">
    <location>
        <begin position="87"/>
        <end position="91"/>
    </location>
    <ligand>
        <name>ATP</name>
        <dbReference type="ChEBI" id="CHEBI:30616"/>
    </ligand>
</feature>
<feature type="binding site" evidence="1">
    <location>
        <position position="414"/>
    </location>
    <ligand>
        <name>ATP</name>
        <dbReference type="ChEBI" id="CHEBI:30616"/>
    </ligand>
</feature>
<feature type="binding site" evidence="1">
    <location>
        <position position="495"/>
    </location>
    <ligand>
        <name>ATP</name>
        <dbReference type="ChEBI" id="CHEBI:30616"/>
    </ligand>
</feature>
<keyword id="KW-0067">ATP-binding</keyword>
<keyword id="KW-0143">Chaperone</keyword>
<keyword id="KW-0963">Cytoplasm</keyword>
<keyword id="KW-0413">Isomerase</keyword>
<keyword id="KW-0547">Nucleotide-binding</keyword>
<evidence type="ECO:0000255" key="1">
    <source>
        <dbReference type="HAMAP-Rule" id="MF_00600"/>
    </source>
</evidence>